<feature type="chain" id="PRO_0000047676" description="Zinc finger protein 584">
    <location>
        <begin position="1"/>
        <end position="421"/>
    </location>
</feature>
<feature type="domain" description="KRAB" evidence="2">
    <location>
        <begin position="17"/>
        <end position="88"/>
    </location>
</feature>
<feature type="zinc finger region" description="C2H2-type 1" evidence="1">
    <location>
        <begin position="159"/>
        <end position="181"/>
    </location>
</feature>
<feature type="zinc finger region" description="C2H2-type 2" evidence="1">
    <location>
        <begin position="214"/>
        <end position="236"/>
    </location>
</feature>
<feature type="zinc finger region" description="C2H2-type 3" evidence="1">
    <location>
        <begin position="242"/>
        <end position="264"/>
    </location>
</feature>
<feature type="zinc finger region" description="C2H2-type 4" evidence="1">
    <location>
        <begin position="270"/>
        <end position="292"/>
    </location>
</feature>
<feature type="zinc finger region" description="C2H2-type 5" evidence="1">
    <location>
        <begin position="298"/>
        <end position="320"/>
    </location>
</feature>
<feature type="zinc finger region" description="C2H2-type 6" evidence="1">
    <location>
        <begin position="326"/>
        <end position="348"/>
    </location>
</feature>
<feature type="zinc finger region" description="C2H2-type 7" evidence="1">
    <location>
        <begin position="354"/>
        <end position="376"/>
    </location>
</feature>
<feature type="zinc finger region" description="C2H2-type 8" evidence="1">
    <location>
        <begin position="382"/>
        <end position="404"/>
    </location>
</feature>
<feature type="region of interest" description="Disordered" evidence="3">
    <location>
        <begin position="120"/>
        <end position="146"/>
    </location>
</feature>
<feature type="region of interest" description="Disordered" evidence="3">
    <location>
        <begin position="402"/>
        <end position="421"/>
    </location>
</feature>
<feature type="compositionally biased region" description="Basic and acidic residues" evidence="3">
    <location>
        <begin position="120"/>
        <end position="129"/>
    </location>
</feature>
<feature type="compositionally biased region" description="Basic and acidic residues" evidence="3">
    <location>
        <begin position="404"/>
        <end position="415"/>
    </location>
</feature>
<feature type="sequence variant" id="VAR_033579" description="In dbSNP:rs11668789.">
    <original>P</original>
    <variation>S</variation>
    <location>
        <position position="142"/>
    </location>
</feature>
<feature type="sequence variant" id="VAR_033580" description="In dbSNP:rs7257872." evidence="4">
    <original>T</original>
    <variation>A</variation>
    <location>
        <position position="301"/>
    </location>
</feature>
<gene>
    <name type="primary">ZNF584</name>
</gene>
<dbReference type="EMBL" id="AK290068">
    <property type="protein sequence ID" value="BAF82757.1"/>
    <property type="molecule type" value="mRNA"/>
</dbReference>
<dbReference type="EMBL" id="BC033149">
    <property type="protein sequence ID" value="AAH33149.1"/>
    <property type="molecule type" value="mRNA"/>
</dbReference>
<dbReference type="CCDS" id="CCDS12979.1"/>
<dbReference type="RefSeq" id="NP_001304931.1">
    <property type="nucleotide sequence ID" value="NM_001318002.1"/>
</dbReference>
<dbReference type="RefSeq" id="NP_775819.1">
    <property type="nucleotide sequence ID" value="NM_173548.3"/>
</dbReference>
<dbReference type="SMR" id="Q8IVC4"/>
<dbReference type="BioGRID" id="128391">
    <property type="interactions" value="12"/>
</dbReference>
<dbReference type="IntAct" id="Q8IVC4">
    <property type="interactions" value="9"/>
</dbReference>
<dbReference type="STRING" id="9606.ENSP00000306756"/>
<dbReference type="iPTMnet" id="Q8IVC4"/>
<dbReference type="PhosphoSitePlus" id="Q8IVC4"/>
<dbReference type="BioMuta" id="ZNF584"/>
<dbReference type="DMDM" id="55976735"/>
<dbReference type="MassIVE" id="Q8IVC4"/>
<dbReference type="PaxDb" id="9606-ENSP00000306756"/>
<dbReference type="PeptideAtlas" id="Q8IVC4"/>
<dbReference type="ProteomicsDB" id="70680"/>
<dbReference type="Pumba" id="Q8IVC4"/>
<dbReference type="Antibodypedia" id="21593">
    <property type="antibodies" value="43 antibodies from 14 providers"/>
</dbReference>
<dbReference type="DNASU" id="201514"/>
<dbReference type="Ensembl" id="ENST00000306910.9">
    <property type="protein sequence ID" value="ENSP00000306756.3"/>
    <property type="gene ID" value="ENSG00000171574.19"/>
</dbReference>
<dbReference type="GeneID" id="201514"/>
<dbReference type="KEGG" id="hsa:201514"/>
<dbReference type="MANE-Select" id="ENST00000306910.9">
    <property type="protein sequence ID" value="ENSP00000306756.3"/>
    <property type="RefSeq nucleotide sequence ID" value="NM_173548.3"/>
    <property type="RefSeq protein sequence ID" value="NP_775819.1"/>
</dbReference>
<dbReference type="UCSC" id="uc002qsp.4">
    <property type="organism name" value="human"/>
</dbReference>
<dbReference type="AGR" id="HGNC:27318"/>
<dbReference type="CTD" id="201514"/>
<dbReference type="DisGeNET" id="201514"/>
<dbReference type="GeneCards" id="ZNF584"/>
<dbReference type="HGNC" id="HGNC:27318">
    <property type="gene designation" value="ZNF584"/>
</dbReference>
<dbReference type="HPA" id="ENSG00000171574">
    <property type="expression patterns" value="Low tissue specificity"/>
</dbReference>
<dbReference type="neXtProt" id="NX_Q8IVC4"/>
<dbReference type="OpenTargets" id="ENSG00000171574"/>
<dbReference type="PharmGKB" id="PA134968861"/>
<dbReference type="VEuPathDB" id="HostDB:ENSG00000171574"/>
<dbReference type="eggNOG" id="KOG1721">
    <property type="taxonomic scope" value="Eukaryota"/>
</dbReference>
<dbReference type="GeneTree" id="ENSGT00940000163291"/>
<dbReference type="HOGENOM" id="CLU_002678_0_9_1"/>
<dbReference type="InParanoid" id="Q8IVC4"/>
<dbReference type="OMA" id="WVPSMVD"/>
<dbReference type="OrthoDB" id="6077919at2759"/>
<dbReference type="PAN-GO" id="Q8IVC4">
    <property type="GO annotations" value="4 GO annotations based on evolutionary models"/>
</dbReference>
<dbReference type="PhylomeDB" id="Q8IVC4"/>
<dbReference type="TreeFam" id="TF337055"/>
<dbReference type="PathwayCommons" id="Q8IVC4"/>
<dbReference type="Reactome" id="R-HSA-212436">
    <property type="pathway name" value="Generic Transcription Pathway"/>
</dbReference>
<dbReference type="SignaLink" id="Q8IVC4"/>
<dbReference type="BioGRID-ORCS" id="201514">
    <property type="hits" value="17 hits in 1177 CRISPR screens"/>
</dbReference>
<dbReference type="ChiTaRS" id="ZNF584">
    <property type="organism name" value="human"/>
</dbReference>
<dbReference type="GenomeRNAi" id="201514"/>
<dbReference type="Pharos" id="Q8IVC4">
    <property type="development level" value="Tdark"/>
</dbReference>
<dbReference type="PRO" id="PR:Q8IVC4"/>
<dbReference type="Proteomes" id="UP000005640">
    <property type="component" value="Chromosome 19"/>
</dbReference>
<dbReference type="RNAct" id="Q8IVC4">
    <property type="molecule type" value="protein"/>
</dbReference>
<dbReference type="Bgee" id="ENSG00000171574">
    <property type="expression patterns" value="Expressed in oocyte and 137 other cell types or tissues"/>
</dbReference>
<dbReference type="ExpressionAtlas" id="Q8IVC4">
    <property type="expression patterns" value="baseline and differential"/>
</dbReference>
<dbReference type="GO" id="GO:0005634">
    <property type="term" value="C:nucleus"/>
    <property type="evidence" value="ECO:0000318"/>
    <property type="project" value="GO_Central"/>
</dbReference>
<dbReference type="GO" id="GO:0000981">
    <property type="term" value="F:DNA-binding transcription factor activity, RNA polymerase II-specific"/>
    <property type="evidence" value="ECO:0000318"/>
    <property type="project" value="GO_Central"/>
</dbReference>
<dbReference type="GO" id="GO:0000978">
    <property type="term" value="F:RNA polymerase II cis-regulatory region sequence-specific DNA binding"/>
    <property type="evidence" value="ECO:0000318"/>
    <property type="project" value="GO_Central"/>
</dbReference>
<dbReference type="GO" id="GO:0008270">
    <property type="term" value="F:zinc ion binding"/>
    <property type="evidence" value="ECO:0007669"/>
    <property type="project" value="UniProtKB-KW"/>
</dbReference>
<dbReference type="GO" id="GO:0006357">
    <property type="term" value="P:regulation of transcription by RNA polymerase II"/>
    <property type="evidence" value="ECO:0000318"/>
    <property type="project" value="GO_Central"/>
</dbReference>
<dbReference type="CDD" id="cd07765">
    <property type="entry name" value="KRAB_A-box"/>
    <property type="match status" value="1"/>
</dbReference>
<dbReference type="FunFam" id="3.30.160.60:FF:000478">
    <property type="entry name" value="Zinc finger protein 133"/>
    <property type="match status" value="1"/>
</dbReference>
<dbReference type="FunFam" id="3.30.160.60:FF:000295">
    <property type="entry name" value="zinc finger protein 19"/>
    <property type="match status" value="1"/>
</dbReference>
<dbReference type="FunFam" id="3.30.160.60:FF:000352">
    <property type="entry name" value="zinc finger protein 3 homolog"/>
    <property type="match status" value="1"/>
</dbReference>
<dbReference type="FunFam" id="3.30.160.60:FF:000384">
    <property type="entry name" value="Zinc finger protein 550"/>
    <property type="match status" value="2"/>
</dbReference>
<dbReference type="FunFam" id="3.30.160.60:FF:000098">
    <property type="entry name" value="Zinc finger protein 614"/>
    <property type="match status" value="2"/>
</dbReference>
<dbReference type="Gene3D" id="6.10.140.140">
    <property type="match status" value="1"/>
</dbReference>
<dbReference type="Gene3D" id="3.30.160.60">
    <property type="entry name" value="Classic Zinc Finger"/>
    <property type="match status" value="8"/>
</dbReference>
<dbReference type="InterPro" id="IPR001909">
    <property type="entry name" value="KRAB"/>
</dbReference>
<dbReference type="InterPro" id="IPR036051">
    <property type="entry name" value="KRAB_dom_sf"/>
</dbReference>
<dbReference type="InterPro" id="IPR036236">
    <property type="entry name" value="Znf_C2H2_sf"/>
</dbReference>
<dbReference type="InterPro" id="IPR013087">
    <property type="entry name" value="Znf_C2H2_type"/>
</dbReference>
<dbReference type="PANTHER" id="PTHR24379">
    <property type="entry name" value="KRAB AND ZINC FINGER DOMAIN-CONTAINING"/>
    <property type="match status" value="1"/>
</dbReference>
<dbReference type="PANTHER" id="PTHR24379:SF122">
    <property type="entry name" value="SIMILAR TO ZINC FINGER PROTEIN 84 (HPF2)"/>
    <property type="match status" value="1"/>
</dbReference>
<dbReference type="Pfam" id="PF01352">
    <property type="entry name" value="KRAB"/>
    <property type="match status" value="1"/>
</dbReference>
<dbReference type="Pfam" id="PF00096">
    <property type="entry name" value="zf-C2H2"/>
    <property type="match status" value="7"/>
</dbReference>
<dbReference type="Pfam" id="PF13894">
    <property type="entry name" value="zf-C2H2_4"/>
    <property type="match status" value="1"/>
</dbReference>
<dbReference type="SMART" id="SM00349">
    <property type="entry name" value="KRAB"/>
    <property type="match status" value="1"/>
</dbReference>
<dbReference type="SMART" id="SM00355">
    <property type="entry name" value="ZnF_C2H2"/>
    <property type="match status" value="8"/>
</dbReference>
<dbReference type="SUPFAM" id="SSF57667">
    <property type="entry name" value="beta-beta-alpha zinc fingers"/>
    <property type="match status" value="5"/>
</dbReference>
<dbReference type="SUPFAM" id="SSF109640">
    <property type="entry name" value="KRAB domain (Kruppel-associated box)"/>
    <property type="match status" value="1"/>
</dbReference>
<dbReference type="PROSITE" id="PS50805">
    <property type="entry name" value="KRAB"/>
    <property type="match status" value="1"/>
</dbReference>
<dbReference type="PROSITE" id="PS00028">
    <property type="entry name" value="ZINC_FINGER_C2H2_1"/>
    <property type="match status" value="8"/>
</dbReference>
<dbReference type="PROSITE" id="PS50157">
    <property type="entry name" value="ZINC_FINGER_C2H2_2"/>
    <property type="match status" value="8"/>
</dbReference>
<accession>Q8IVC4</accession>
<accession>A8K203</accession>
<protein>
    <recommendedName>
        <fullName>Zinc finger protein 584</fullName>
    </recommendedName>
</protein>
<proteinExistence type="evidence at protein level"/>
<name>ZN584_HUMAN</name>
<organism>
    <name type="scientific">Homo sapiens</name>
    <name type="common">Human</name>
    <dbReference type="NCBI Taxonomy" id="9606"/>
    <lineage>
        <taxon>Eukaryota</taxon>
        <taxon>Metazoa</taxon>
        <taxon>Chordata</taxon>
        <taxon>Craniata</taxon>
        <taxon>Vertebrata</taxon>
        <taxon>Euteleostomi</taxon>
        <taxon>Mammalia</taxon>
        <taxon>Eutheria</taxon>
        <taxon>Euarchontoglires</taxon>
        <taxon>Primates</taxon>
        <taxon>Haplorrhini</taxon>
        <taxon>Catarrhini</taxon>
        <taxon>Hominidae</taxon>
        <taxon>Homo</taxon>
    </lineage>
</organism>
<sequence>MAGEAEAQLDPSLQGLVMFEDVTVYFSREEWGLLNVTQKGLYRDVMLENFALVSSLGLAPSRSPVFTQLEDDEQSWVPSWVDVTPVSRAEARRGFGLDGLCRVEDERAHPEHLKSYRVIQHQDTHSEGKPRRHTEHGAAFPPGSSCGQQQEVHVAEKLFKCSDCGKVFLKAFALLDHLITHSEERPFRCPTGRSAFKKSAHINPRKIHTGETAHVCNECGKAFSYPSKLRKHQKVHTGIKPFKCSDCGKTFNRKDALVLHQRIHTGERPYECSKCGKTFSVLSTLIRHRKVHIGERPYECTECGKFFKYNNSFILHQRVHTGERPFECKQCGKGYVTRSGLYQHWKVHTGERPYECSLCGKTFTTRSYRNRHQQFHTEERSYECTECGKAFKHSSTLLQHKKVHTPERRQEDRAHGKVVSC</sequence>
<keyword id="KW-0238">DNA-binding</keyword>
<keyword id="KW-0479">Metal-binding</keyword>
<keyword id="KW-0539">Nucleus</keyword>
<keyword id="KW-1267">Proteomics identification</keyword>
<keyword id="KW-1185">Reference proteome</keyword>
<keyword id="KW-0677">Repeat</keyword>
<keyword id="KW-0804">Transcription</keyword>
<keyword id="KW-0805">Transcription regulation</keyword>
<keyword id="KW-0862">Zinc</keyword>
<keyword id="KW-0863">Zinc-finger</keyword>
<comment type="function">
    <text>May be involved in transcriptional regulation.</text>
</comment>
<comment type="subcellular location">
    <subcellularLocation>
        <location evidence="5">Nucleus</location>
    </subcellularLocation>
</comment>
<comment type="similarity">
    <text evidence="5">Belongs to the krueppel C2H2-type zinc-finger protein family.</text>
</comment>
<evidence type="ECO:0000255" key="1">
    <source>
        <dbReference type="PROSITE-ProRule" id="PRU00042"/>
    </source>
</evidence>
<evidence type="ECO:0000255" key="2">
    <source>
        <dbReference type="PROSITE-ProRule" id="PRU00119"/>
    </source>
</evidence>
<evidence type="ECO:0000256" key="3">
    <source>
        <dbReference type="SAM" id="MobiDB-lite"/>
    </source>
</evidence>
<evidence type="ECO:0000269" key="4">
    <source>
    </source>
</evidence>
<evidence type="ECO:0000305" key="5"/>
<reference key="1">
    <citation type="journal article" date="2004" name="Nat. Genet.">
        <title>Complete sequencing and characterization of 21,243 full-length human cDNAs.</title>
        <authorList>
            <person name="Ota T."/>
            <person name="Suzuki Y."/>
            <person name="Nishikawa T."/>
            <person name="Otsuki T."/>
            <person name="Sugiyama T."/>
            <person name="Irie R."/>
            <person name="Wakamatsu A."/>
            <person name="Hayashi K."/>
            <person name="Sato H."/>
            <person name="Nagai K."/>
            <person name="Kimura K."/>
            <person name="Makita H."/>
            <person name="Sekine M."/>
            <person name="Obayashi M."/>
            <person name="Nishi T."/>
            <person name="Shibahara T."/>
            <person name="Tanaka T."/>
            <person name="Ishii S."/>
            <person name="Yamamoto J."/>
            <person name="Saito K."/>
            <person name="Kawai Y."/>
            <person name="Isono Y."/>
            <person name="Nakamura Y."/>
            <person name="Nagahari K."/>
            <person name="Murakami K."/>
            <person name="Yasuda T."/>
            <person name="Iwayanagi T."/>
            <person name="Wagatsuma M."/>
            <person name="Shiratori A."/>
            <person name="Sudo H."/>
            <person name="Hosoiri T."/>
            <person name="Kaku Y."/>
            <person name="Kodaira H."/>
            <person name="Kondo H."/>
            <person name="Sugawara M."/>
            <person name="Takahashi M."/>
            <person name="Kanda K."/>
            <person name="Yokoi T."/>
            <person name="Furuya T."/>
            <person name="Kikkawa E."/>
            <person name="Omura Y."/>
            <person name="Abe K."/>
            <person name="Kamihara K."/>
            <person name="Katsuta N."/>
            <person name="Sato K."/>
            <person name="Tanikawa M."/>
            <person name="Yamazaki M."/>
            <person name="Ninomiya K."/>
            <person name="Ishibashi T."/>
            <person name="Yamashita H."/>
            <person name="Murakawa K."/>
            <person name="Fujimori K."/>
            <person name="Tanai H."/>
            <person name="Kimata M."/>
            <person name="Watanabe M."/>
            <person name="Hiraoka S."/>
            <person name="Chiba Y."/>
            <person name="Ishida S."/>
            <person name="Ono Y."/>
            <person name="Takiguchi S."/>
            <person name="Watanabe S."/>
            <person name="Yosida M."/>
            <person name="Hotuta T."/>
            <person name="Kusano J."/>
            <person name="Kanehori K."/>
            <person name="Takahashi-Fujii A."/>
            <person name="Hara H."/>
            <person name="Tanase T.-O."/>
            <person name="Nomura Y."/>
            <person name="Togiya S."/>
            <person name="Komai F."/>
            <person name="Hara R."/>
            <person name="Takeuchi K."/>
            <person name="Arita M."/>
            <person name="Imose N."/>
            <person name="Musashino K."/>
            <person name="Yuuki H."/>
            <person name="Oshima A."/>
            <person name="Sasaki N."/>
            <person name="Aotsuka S."/>
            <person name="Yoshikawa Y."/>
            <person name="Matsunawa H."/>
            <person name="Ichihara T."/>
            <person name="Shiohata N."/>
            <person name="Sano S."/>
            <person name="Moriya S."/>
            <person name="Momiyama H."/>
            <person name="Satoh N."/>
            <person name="Takami S."/>
            <person name="Terashima Y."/>
            <person name="Suzuki O."/>
            <person name="Nakagawa S."/>
            <person name="Senoh A."/>
            <person name="Mizoguchi H."/>
            <person name="Goto Y."/>
            <person name="Shimizu F."/>
            <person name="Wakebe H."/>
            <person name="Hishigaki H."/>
            <person name="Watanabe T."/>
            <person name="Sugiyama A."/>
            <person name="Takemoto M."/>
            <person name="Kawakami B."/>
            <person name="Yamazaki M."/>
            <person name="Watanabe K."/>
            <person name="Kumagai A."/>
            <person name="Itakura S."/>
            <person name="Fukuzumi Y."/>
            <person name="Fujimori Y."/>
            <person name="Komiyama M."/>
            <person name="Tashiro H."/>
            <person name="Tanigami A."/>
            <person name="Fujiwara T."/>
            <person name="Ono T."/>
            <person name="Yamada K."/>
            <person name="Fujii Y."/>
            <person name="Ozaki K."/>
            <person name="Hirao M."/>
            <person name="Ohmori Y."/>
            <person name="Kawabata A."/>
            <person name="Hikiji T."/>
            <person name="Kobatake N."/>
            <person name="Inagaki H."/>
            <person name="Ikema Y."/>
            <person name="Okamoto S."/>
            <person name="Okitani R."/>
            <person name="Kawakami T."/>
            <person name="Noguchi S."/>
            <person name="Itoh T."/>
            <person name="Shigeta K."/>
            <person name="Senba T."/>
            <person name="Matsumura K."/>
            <person name="Nakajima Y."/>
            <person name="Mizuno T."/>
            <person name="Morinaga M."/>
            <person name="Sasaki M."/>
            <person name="Togashi T."/>
            <person name="Oyama M."/>
            <person name="Hata H."/>
            <person name="Watanabe M."/>
            <person name="Komatsu T."/>
            <person name="Mizushima-Sugano J."/>
            <person name="Satoh T."/>
            <person name="Shirai Y."/>
            <person name="Takahashi Y."/>
            <person name="Nakagawa K."/>
            <person name="Okumura K."/>
            <person name="Nagase T."/>
            <person name="Nomura N."/>
            <person name="Kikuchi H."/>
            <person name="Masuho Y."/>
            <person name="Yamashita R."/>
            <person name="Nakai K."/>
            <person name="Yada T."/>
            <person name="Nakamura Y."/>
            <person name="Ohara O."/>
            <person name="Isogai T."/>
            <person name="Sugano S."/>
        </authorList>
    </citation>
    <scope>NUCLEOTIDE SEQUENCE [LARGE SCALE MRNA]</scope>
    <scope>VARIANT ALA-301</scope>
    <source>
        <tissue>Substantia nigra</tissue>
    </source>
</reference>
<reference key="2">
    <citation type="journal article" date="2004" name="Genome Res.">
        <title>The status, quality, and expansion of the NIH full-length cDNA project: the Mammalian Gene Collection (MGC).</title>
        <authorList>
            <consortium name="The MGC Project Team"/>
        </authorList>
    </citation>
    <scope>NUCLEOTIDE SEQUENCE [LARGE SCALE MRNA]</scope>
    <source>
        <tissue>Brain</tissue>
    </source>
</reference>